<evidence type="ECO:0000255" key="1">
    <source>
        <dbReference type="HAMAP-Rule" id="MF_00104"/>
    </source>
</evidence>
<feature type="chain" id="PRO_0000228569" description="Ribonuclease 3">
    <location>
        <begin position="1"/>
        <end position="229"/>
    </location>
</feature>
<feature type="domain" description="RNase III" evidence="1">
    <location>
        <begin position="5"/>
        <end position="127"/>
    </location>
</feature>
<feature type="domain" description="DRBM" evidence="1">
    <location>
        <begin position="154"/>
        <end position="224"/>
    </location>
</feature>
<feature type="active site" evidence="1">
    <location>
        <position position="44"/>
    </location>
</feature>
<feature type="active site" evidence="1">
    <location>
        <position position="116"/>
    </location>
</feature>
<feature type="binding site" evidence="1">
    <location>
        <position position="40"/>
    </location>
    <ligand>
        <name>Mg(2+)</name>
        <dbReference type="ChEBI" id="CHEBI:18420"/>
    </ligand>
</feature>
<feature type="binding site" evidence="1">
    <location>
        <position position="113"/>
    </location>
    <ligand>
        <name>Mg(2+)</name>
        <dbReference type="ChEBI" id="CHEBI:18420"/>
    </ligand>
</feature>
<feature type="binding site" evidence="1">
    <location>
        <position position="116"/>
    </location>
    <ligand>
        <name>Mg(2+)</name>
        <dbReference type="ChEBI" id="CHEBI:18420"/>
    </ligand>
</feature>
<accession>Q4ZPE1</accession>
<organism>
    <name type="scientific">Pseudomonas syringae pv. syringae (strain B728a)</name>
    <dbReference type="NCBI Taxonomy" id="205918"/>
    <lineage>
        <taxon>Bacteria</taxon>
        <taxon>Pseudomonadati</taxon>
        <taxon>Pseudomonadota</taxon>
        <taxon>Gammaproteobacteria</taxon>
        <taxon>Pseudomonadales</taxon>
        <taxon>Pseudomonadaceae</taxon>
        <taxon>Pseudomonas</taxon>
        <taxon>Pseudomonas syringae</taxon>
    </lineage>
</organism>
<sequence length="229" mass="25574">MSVSLSRLERQLGYTFKDQELMVLALTHRSFAGRNNERLEFLGDAILNFVAGEALFERFPQAREGQLSRLRARLVKGETLALLARGFDLGEYLRLGSGELKSGGFRRESILADALEALIGAIYLDAGMEAARERVLAWLTTEFDSLTLVDTNKDPKTRLQEFLQSRACELPRYEVVDIQGEPHCRTFFVECEINLLNEKSRGQGVSRRIAEQVAAAAALIALGVENGHE</sequence>
<name>RNC_PSEU2</name>
<protein>
    <recommendedName>
        <fullName evidence="1">Ribonuclease 3</fullName>
        <ecNumber evidence="1">3.1.26.3</ecNumber>
    </recommendedName>
    <alternativeName>
        <fullName evidence="1">Ribonuclease III</fullName>
        <shortName evidence="1">RNase III</shortName>
    </alternativeName>
</protein>
<gene>
    <name evidence="1" type="primary">rnc</name>
    <name type="ordered locus">Psyr_3951</name>
</gene>
<proteinExistence type="inferred from homology"/>
<dbReference type="EC" id="3.1.26.3" evidence="1"/>
<dbReference type="EMBL" id="CP000075">
    <property type="protein sequence ID" value="AAY38981.1"/>
    <property type="molecule type" value="Genomic_DNA"/>
</dbReference>
<dbReference type="RefSeq" id="WP_002554906.1">
    <property type="nucleotide sequence ID" value="NC_007005.1"/>
</dbReference>
<dbReference type="RefSeq" id="YP_237019.1">
    <property type="nucleotide sequence ID" value="NC_007005.1"/>
</dbReference>
<dbReference type="SMR" id="Q4ZPE1"/>
<dbReference type="STRING" id="205918.Psyr_3951"/>
<dbReference type="GeneID" id="96220435"/>
<dbReference type="KEGG" id="psb:Psyr_3951"/>
<dbReference type="PATRIC" id="fig|205918.7.peg.4068"/>
<dbReference type="eggNOG" id="COG0571">
    <property type="taxonomic scope" value="Bacteria"/>
</dbReference>
<dbReference type="HOGENOM" id="CLU_000907_1_1_6"/>
<dbReference type="OrthoDB" id="9805026at2"/>
<dbReference type="Proteomes" id="UP000000426">
    <property type="component" value="Chromosome"/>
</dbReference>
<dbReference type="GO" id="GO:0005737">
    <property type="term" value="C:cytoplasm"/>
    <property type="evidence" value="ECO:0007669"/>
    <property type="project" value="UniProtKB-SubCell"/>
</dbReference>
<dbReference type="GO" id="GO:0003725">
    <property type="term" value="F:double-stranded RNA binding"/>
    <property type="evidence" value="ECO:0007669"/>
    <property type="project" value="TreeGrafter"/>
</dbReference>
<dbReference type="GO" id="GO:0046872">
    <property type="term" value="F:metal ion binding"/>
    <property type="evidence" value="ECO:0007669"/>
    <property type="project" value="UniProtKB-KW"/>
</dbReference>
<dbReference type="GO" id="GO:0004525">
    <property type="term" value="F:ribonuclease III activity"/>
    <property type="evidence" value="ECO:0007669"/>
    <property type="project" value="UniProtKB-UniRule"/>
</dbReference>
<dbReference type="GO" id="GO:0019843">
    <property type="term" value="F:rRNA binding"/>
    <property type="evidence" value="ECO:0007669"/>
    <property type="project" value="UniProtKB-KW"/>
</dbReference>
<dbReference type="GO" id="GO:0006397">
    <property type="term" value="P:mRNA processing"/>
    <property type="evidence" value="ECO:0007669"/>
    <property type="project" value="UniProtKB-UniRule"/>
</dbReference>
<dbReference type="GO" id="GO:0010468">
    <property type="term" value="P:regulation of gene expression"/>
    <property type="evidence" value="ECO:0007669"/>
    <property type="project" value="TreeGrafter"/>
</dbReference>
<dbReference type="GO" id="GO:0006364">
    <property type="term" value="P:rRNA processing"/>
    <property type="evidence" value="ECO:0007669"/>
    <property type="project" value="UniProtKB-UniRule"/>
</dbReference>
<dbReference type="GO" id="GO:0008033">
    <property type="term" value="P:tRNA processing"/>
    <property type="evidence" value="ECO:0007669"/>
    <property type="project" value="UniProtKB-KW"/>
</dbReference>
<dbReference type="CDD" id="cd10845">
    <property type="entry name" value="DSRM_RNAse_III_family"/>
    <property type="match status" value="1"/>
</dbReference>
<dbReference type="CDD" id="cd00593">
    <property type="entry name" value="RIBOc"/>
    <property type="match status" value="1"/>
</dbReference>
<dbReference type="FunFam" id="1.10.1520.10:FF:000001">
    <property type="entry name" value="Ribonuclease 3"/>
    <property type="match status" value="1"/>
</dbReference>
<dbReference type="FunFam" id="3.30.160.20:FF:000003">
    <property type="entry name" value="Ribonuclease 3"/>
    <property type="match status" value="1"/>
</dbReference>
<dbReference type="Gene3D" id="3.30.160.20">
    <property type="match status" value="1"/>
</dbReference>
<dbReference type="Gene3D" id="1.10.1520.10">
    <property type="entry name" value="Ribonuclease III domain"/>
    <property type="match status" value="1"/>
</dbReference>
<dbReference type="HAMAP" id="MF_00104">
    <property type="entry name" value="RNase_III"/>
    <property type="match status" value="1"/>
</dbReference>
<dbReference type="InterPro" id="IPR014720">
    <property type="entry name" value="dsRBD_dom"/>
</dbReference>
<dbReference type="InterPro" id="IPR011907">
    <property type="entry name" value="RNase_III"/>
</dbReference>
<dbReference type="InterPro" id="IPR000999">
    <property type="entry name" value="RNase_III_dom"/>
</dbReference>
<dbReference type="InterPro" id="IPR036389">
    <property type="entry name" value="RNase_III_sf"/>
</dbReference>
<dbReference type="NCBIfam" id="TIGR02191">
    <property type="entry name" value="RNaseIII"/>
    <property type="match status" value="1"/>
</dbReference>
<dbReference type="PANTHER" id="PTHR11207:SF0">
    <property type="entry name" value="RIBONUCLEASE 3"/>
    <property type="match status" value="1"/>
</dbReference>
<dbReference type="PANTHER" id="PTHR11207">
    <property type="entry name" value="RIBONUCLEASE III"/>
    <property type="match status" value="1"/>
</dbReference>
<dbReference type="Pfam" id="PF00035">
    <property type="entry name" value="dsrm"/>
    <property type="match status" value="1"/>
</dbReference>
<dbReference type="Pfam" id="PF14622">
    <property type="entry name" value="Ribonucleas_3_3"/>
    <property type="match status" value="1"/>
</dbReference>
<dbReference type="SMART" id="SM00358">
    <property type="entry name" value="DSRM"/>
    <property type="match status" value="1"/>
</dbReference>
<dbReference type="SMART" id="SM00535">
    <property type="entry name" value="RIBOc"/>
    <property type="match status" value="1"/>
</dbReference>
<dbReference type="SUPFAM" id="SSF54768">
    <property type="entry name" value="dsRNA-binding domain-like"/>
    <property type="match status" value="1"/>
</dbReference>
<dbReference type="SUPFAM" id="SSF69065">
    <property type="entry name" value="RNase III domain-like"/>
    <property type="match status" value="1"/>
</dbReference>
<dbReference type="PROSITE" id="PS50137">
    <property type="entry name" value="DS_RBD"/>
    <property type="match status" value="1"/>
</dbReference>
<dbReference type="PROSITE" id="PS00517">
    <property type="entry name" value="RNASE_3_1"/>
    <property type="match status" value="1"/>
</dbReference>
<dbReference type="PROSITE" id="PS50142">
    <property type="entry name" value="RNASE_3_2"/>
    <property type="match status" value="1"/>
</dbReference>
<keyword id="KW-0963">Cytoplasm</keyword>
<keyword id="KW-0255">Endonuclease</keyword>
<keyword id="KW-0378">Hydrolase</keyword>
<keyword id="KW-0460">Magnesium</keyword>
<keyword id="KW-0479">Metal-binding</keyword>
<keyword id="KW-0507">mRNA processing</keyword>
<keyword id="KW-0540">Nuclease</keyword>
<keyword id="KW-0694">RNA-binding</keyword>
<keyword id="KW-0698">rRNA processing</keyword>
<keyword id="KW-0699">rRNA-binding</keyword>
<keyword id="KW-0819">tRNA processing</keyword>
<reference key="1">
    <citation type="journal article" date="2005" name="Proc. Natl. Acad. Sci. U.S.A.">
        <title>Comparison of the complete genome sequences of Pseudomonas syringae pv. syringae B728a and pv. tomato DC3000.</title>
        <authorList>
            <person name="Feil H."/>
            <person name="Feil W.S."/>
            <person name="Chain P."/>
            <person name="Larimer F."/>
            <person name="Dibartolo G."/>
            <person name="Copeland A."/>
            <person name="Lykidis A."/>
            <person name="Trong S."/>
            <person name="Nolan M."/>
            <person name="Goltsman E."/>
            <person name="Thiel J."/>
            <person name="Malfatti S."/>
            <person name="Loper J.E."/>
            <person name="Lapidus A."/>
            <person name="Detter J.C."/>
            <person name="Land M."/>
            <person name="Richardson P.M."/>
            <person name="Kyrpides N.C."/>
            <person name="Ivanova N."/>
            <person name="Lindow S.E."/>
        </authorList>
    </citation>
    <scope>NUCLEOTIDE SEQUENCE [LARGE SCALE GENOMIC DNA]</scope>
    <source>
        <strain>B728a</strain>
    </source>
</reference>
<comment type="function">
    <text evidence="1">Digests double-stranded RNA. Involved in the processing of primary rRNA transcript to yield the immediate precursors to the large and small rRNAs (23S and 16S). Processes some mRNAs, and tRNAs when they are encoded in the rRNA operon. Processes pre-crRNA and tracrRNA of type II CRISPR loci if present in the organism.</text>
</comment>
<comment type="catalytic activity">
    <reaction evidence="1">
        <text>Endonucleolytic cleavage to 5'-phosphomonoester.</text>
        <dbReference type="EC" id="3.1.26.3"/>
    </reaction>
</comment>
<comment type="cofactor">
    <cofactor evidence="1">
        <name>Mg(2+)</name>
        <dbReference type="ChEBI" id="CHEBI:18420"/>
    </cofactor>
</comment>
<comment type="subunit">
    <text evidence="1">Homodimer.</text>
</comment>
<comment type="subcellular location">
    <subcellularLocation>
        <location evidence="1">Cytoplasm</location>
    </subcellularLocation>
</comment>
<comment type="similarity">
    <text evidence="1">Belongs to the ribonuclease III family.</text>
</comment>